<proteinExistence type="inferred from homology"/>
<dbReference type="EC" id="2.4.2.17" evidence="1"/>
<dbReference type="EMBL" id="CP000786">
    <property type="protein sequence ID" value="ABZ98672.1"/>
    <property type="molecule type" value="Genomic_DNA"/>
</dbReference>
<dbReference type="RefSeq" id="WP_012389532.1">
    <property type="nucleotide sequence ID" value="NC_010602.1"/>
</dbReference>
<dbReference type="SMR" id="B0SM42"/>
<dbReference type="STRING" id="456481.LEPBI_I2593"/>
<dbReference type="KEGG" id="lbi:LEPBI_I2593"/>
<dbReference type="HOGENOM" id="CLU_038115_2_0_12"/>
<dbReference type="OrthoDB" id="9801867at2"/>
<dbReference type="BioCyc" id="LBIF456481:LEPBI_RS12755-MONOMER"/>
<dbReference type="UniPathway" id="UPA00031">
    <property type="reaction ID" value="UER00006"/>
</dbReference>
<dbReference type="Proteomes" id="UP000001847">
    <property type="component" value="Chromosome I"/>
</dbReference>
<dbReference type="GO" id="GO:0005737">
    <property type="term" value="C:cytoplasm"/>
    <property type="evidence" value="ECO:0007669"/>
    <property type="project" value="UniProtKB-SubCell"/>
</dbReference>
<dbReference type="GO" id="GO:0005524">
    <property type="term" value="F:ATP binding"/>
    <property type="evidence" value="ECO:0007669"/>
    <property type="project" value="UniProtKB-KW"/>
</dbReference>
<dbReference type="GO" id="GO:0003879">
    <property type="term" value="F:ATP phosphoribosyltransferase activity"/>
    <property type="evidence" value="ECO:0007669"/>
    <property type="project" value="UniProtKB-UniRule"/>
</dbReference>
<dbReference type="GO" id="GO:0000105">
    <property type="term" value="P:L-histidine biosynthetic process"/>
    <property type="evidence" value="ECO:0007669"/>
    <property type="project" value="UniProtKB-UniRule"/>
</dbReference>
<dbReference type="CDD" id="cd13595">
    <property type="entry name" value="PBP2_HisGs"/>
    <property type="match status" value="1"/>
</dbReference>
<dbReference type="FunFam" id="3.40.190.10:FF:000008">
    <property type="entry name" value="ATP phosphoribosyltransferase"/>
    <property type="match status" value="1"/>
</dbReference>
<dbReference type="Gene3D" id="3.40.190.10">
    <property type="entry name" value="Periplasmic binding protein-like II"/>
    <property type="match status" value="2"/>
</dbReference>
<dbReference type="HAMAP" id="MF_01018">
    <property type="entry name" value="HisG_Short"/>
    <property type="match status" value="1"/>
</dbReference>
<dbReference type="InterPro" id="IPR013820">
    <property type="entry name" value="ATP_PRibTrfase_cat"/>
</dbReference>
<dbReference type="InterPro" id="IPR018198">
    <property type="entry name" value="ATP_PRibTrfase_CS"/>
</dbReference>
<dbReference type="InterPro" id="IPR001348">
    <property type="entry name" value="ATP_PRibTrfase_HisG"/>
</dbReference>
<dbReference type="InterPro" id="IPR024893">
    <property type="entry name" value="ATP_PRibTrfase_HisG_short"/>
</dbReference>
<dbReference type="NCBIfam" id="TIGR00070">
    <property type="entry name" value="hisG"/>
    <property type="match status" value="1"/>
</dbReference>
<dbReference type="PANTHER" id="PTHR21403:SF8">
    <property type="entry name" value="ATP PHOSPHORIBOSYLTRANSFERASE"/>
    <property type="match status" value="1"/>
</dbReference>
<dbReference type="PANTHER" id="PTHR21403">
    <property type="entry name" value="ATP PHOSPHORIBOSYLTRANSFERASE ATP-PRTASE"/>
    <property type="match status" value="1"/>
</dbReference>
<dbReference type="Pfam" id="PF01634">
    <property type="entry name" value="HisG"/>
    <property type="match status" value="1"/>
</dbReference>
<dbReference type="SUPFAM" id="SSF53850">
    <property type="entry name" value="Periplasmic binding protein-like II"/>
    <property type="match status" value="1"/>
</dbReference>
<dbReference type="PROSITE" id="PS01316">
    <property type="entry name" value="ATP_P_PHORIBOSYLTR"/>
    <property type="match status" value="1"/>
</dbReference>
<name>HIS1_LEPBP</name>
<gene>
    <name evidence="1" type="primary">hisG</name>
    <name type="ordered locus">LEPBI_I2593</name>
</gene>
<organism>
    <name type="scientific">Leptospira biflexa serovar Patoc (strain Patoc 1 / ATCC 23582 / Paris)</name>
    <dbReference type="NCBI Taxonomy" id="456481"/>
    <lineage>
        <taxon>Bacteria</taxon>
        <taxon>Pseudomonadati</taxon>
        <taxon>Spirochaetota</taxon>
        <taxon>Spirochaetia</taxon>
        <taxon>Leptospirales</taxon>
        <taxon>Leptospiraceae</taxon>
        <taxon>Leptospira</taxon>
    </lineage>
</organism>
<accession>B0SM42</accession>
<keyword id="KW-0028">Amino-acid biosynthesis</keyword>
<keyword id="KW-0067">ATP-binding</keyword>
<keyword id="KW-0963">Cytoplasm</keyword>
<keyword id="KW-0328">Glycosyltransferase</keyword>
<keyword id="KW-0368">Histidine biosynthesis</keyword>
<keyword id="KW-0547">Nucleotide-binding</keyword>
<keyword id="KW-1185">Reference proteome</keyword>
<keyword id="KW-0808">Transferase</keyword>
<sequence>MLTLALPKGRLAEETALLLLSKGWLKNLPSEGSKELTYVSEDKRIRLLFVRSQDVCTYVEEAAADVGIVGWDIIREGGFDLIAPVDLKLGACRLSLASFPDFDLFAKRSKVRVATKYPNLTREYFFSKGISCEIIKLYGSIELAPIVGLSDCIVDLVSTGGTLKANGLKEFESILFSTARLVSNRSSFYHKHAELRSLIESLEN</sequence>
<feature type="chain" id="PRO_1000135285" description="ATP phosphoribosyltransferase">
    <location>
        <begin position="1"/>
        <end position="204"/>
    </location>
</feature>
<evidence type="ECO:0000255" key="1">
    <source>
        <dbReference type="HAMAP-Rule" id="MF_01018"/>
    </source>
</evidence>
<comment type="function">
    <text evidence="1">Catalyzes the condensation of ATP and 5-phosphoribose 1-diphosphate to form N'-(5'-phosphoribosyl)-ATP (PR-ATP). Has a crucial role in the pathway because the rate of histidine biosynthesis seems to be controlled primarily by regulation of HisG enzymatic activity.</text>
</comment>
<comment type="catalytic activity">
    <reaction evidence="1">
        <text>1-(5-phospho-beta-D-ribosyl)-ATP + diphosphate = 5-phospho-alpha-D-ribose 1-diphosphate + ATP</text>
        <dbReference type="Rhea" id="RHEA:18473"/>
        <dbReference type="ChEBI" id="CHEBI:30616"/>
        <dbReference type="ChEBI" id="CHEBI:33019"/>
        <dbReference type="ChEBI" id="CHEBI:58017"/>
        <dbReference type="ChEBI" id="CHEBI:73183"/>
        <dbReference type="EC" id="2.4.2.17"/>
    </reaction>
</comment>
<comment type="pathway">
    <text evidence="1">Amino-acid biosynthesis; L-histidine biosynthesis; L-histidine from 5-phospho-alpha-D-ribose 1-diphosphate: step 1/9.</text>
</comment>
<comment type="subunit">
    <text evidence="1">Heteromultimer composed of HisG and HisZ subunits.</text>
</comment>
<comment type="subcellular location">
    <subcellularLocation>
        <location evidence="1">Cytoplasm</location>
    </subcellularLocation>
</comment>
<comment type="domain">
    <text>Lacks the C-terminal regulatory region which is replaced by HisZ.</text>
</comment>
<comment type="similarity">
    <text evidence="1">Belongs to the ATP phosphoribosyltransferase family. Short subfamily.</text>
</comment>
<protein>
    <recommendedName>
        <fullName evidence="1">ATP phosphoribosyltransferase</fullName>
        <shortName evidence="1">ATP-PRT</shortName>
        <shortName evidence="1">ATP-PRTase</shortName>
        <ecNumber evidence="1">2.4.2.17</ecNumber>
    </recommendedName>
</protein>
<reference key="1">
    <citation type="journal article" date="2008" name="PLoS ONE">
        <title>Genome sequence of the saprophyte Leptospira biflexa provides insights into the evolution of Leptospira and the pathogenesis of leptospirosis.</title>
        <authorList>
            <person name="Picardeau M."/>
            <person name="Bulach D.M."/>
            <person name="Bouchier C."/>
            <person name="Zuerner R.L."/>
            <person name="Zidane N."/>
            <person name="Wilson P.J."/>
            <person name="Creno S."/>
            <person name="Kuczek E.S."/>
            <person name="Bommezzadri S."/>
            <person name="Davis J.C."/>
            <person name="McGrath A."/>
            <person name="Johnson M.J."/>
            <person name="Boursaux-Eude C."/>
            <person name="Seemann T."/>
            <person name="Rouy Z."/>
            <person name="Coppel R.L."/>
            <person name="Rood J.I."/>
            <person name="Lajus A."/>
            <person name="Davies J.K."/>
            <person name="Medigue C."/>
            <person name="Adler B."/>
        </authorList>
    </citation>
    <scope>NUCLEOTIDE SEQUENCE [LARGE SCALE GENOMIC DNA]</scope>
    <source>
        <strain>Patoc 1 / ATCC 23582 / Paris</strain>
    </source>
</reference>